<sequence>MVDTESQICPLSPFGDDDLESPLSEEFLQEMGSIQEISPSIGDDSSGTFAFAEYRCLGSGPGSDGSIITDTLSPASSPSSVSYTPIAGSADDSSSATLNIECRICGDKASGYHYGVHACEGCKGFFRRTIRLKLAYDKCDRSCKIQKKNRNKCQYCRFQKCLSDGMSHNAIRFGRMPRSEKAKLKAEILTCEHDLEDSEVADLKSLAKRIYEAYLKNFNMNKIKARIILAGKASNNPPFVIHDMETLCMAEKTLVAKLVANGIQNKEAEVRIFHCCQCTSVETVTELTEFAKSIPGFSNLNLNDQVTLLKYGVYEAIFAMLSSVMNKDGMLVAYGNGFITREFLKSLRKPFCDIMEPKFDFAMKFNALELDDSDISLFVAAIICCGDRPGLLNVGHIERMQESIVHVLQLHLQNNHPDDVFLFPKLLQKMADLRQLVTEHAQLVQVIKKTESDAALHPLLQEIYRDMY</sequence>
<accession>Q8HYL6</accession>
<organism>
    <name type="scientific">Phascolarctos cinereus</name>
    <name type="common">Koala</name>
    <dbReference type="NCBI Taxonomy" id="38626"/>
    <lineage>
        <taxon>Eukaryota</taxon>
        <taxon>Metazoa</taxon>
        <taxon>Chordata</taxon>
        <taxon>Craniata</taxon>
        <taxon>Vertebrata</taxon>
        <taxon>Euteleostomi</taxon>
        <taxon>Mammalia</taxon>
        <taxon>Metatheria</taxon>
        <taxon>Diprotodontia</taxon>
        <taxon>Phascolarctidae</taxon>
        <taxon>Phascolarctos</taxon>
    </lineage>
</organism>
<feature type="chain" id="PRO_0000053483" description="Peroxisome proliferator-activated receptor alpha">
    <location>
        <begin position="1"/>
        <end position="468"/>
    </location>
</feature>
<feature type="domain" description="NR LBD" evidence="6">
    <location>
        <begin position="239"/>
        <end position="466"/>
    </location>
</feature>
<feature type="DNA-binding region" description="Nuclear receptor" evidence="5">
    <location>
        <begin position="99"/>
        <end position="173"/>
    </location>
</feature>
<feature type="zinc finger region" description="NR C4-type" evidence="5">
    <location>
        <begin position="102"/>
        <end position="122"/>
    </location>
</feature>
<feature type="zinc finger region" description="NR C4-type" evidence="5">
    <location>
        <begin position="139"/>
        <end position="161"/>
    </location>
</feature>
<feature type="region of interest" description="Disordered" evidence="7">
    <location>
        <begin position="1"/>
        <end position="20"/>
    </location>
</feature>
<feature type="region of interest" description="Required for heterodimerization with RXRA" evidence="1">
    <location>
        <begin position="304"/>
        <end position="433"/>
    </location>
</feature>
<feature type="site" description="Essential for heterodimerization with RXRA" evidence="1">
    <location>
        <position position="433"/>
    </location>
</feature>
<protein>
    <recommendedName>
        <fullName>Peroxisome proliferator-activated receptor alpha</fullName>
        <shortName>PPAR-alpha</shortName>
    </recommendedName>
    <alternativeName>
        <fullName>Nuclear receptor subfamily 1 group C member 1</fullName>
    </alternativeName>
</protein>
<reference key="1">
    <citation type="submission" date="2001-12" db="EMBL/GenBank/DDBJ databases">
        <title>Koala liver peroxisome proliferator activated receptor alpha (PPAR-alpha) full-length cDNA.</title>
        <authorList>
            <person name="Ngo S.N.T."/>
            <person name="McKinnon R.A."/>
            <person name="Stupans I."/>
        </authorList>
    </citation>
    <scope>NUCLEOTIDE SEQUENCE [MRNA]</scope>
    <source>
        <tissue>Liver</tissue>
    </source>
</reference>
<comment type="function">
    <text evidence="1">Ligand-activated transcription factor. Key regulator of lipid metabolism. Activated by the endogenous ligand 1-palmitoyl-2-oleoyl-sn-glycerol-3-phosphocholine (16:0/18:1-GPC). Activated by oleylethanolamide, a naturally occurring lipid that regulates satiety. Receptor for peroxisome proliferators such as hypolipidemic drugs and fatty acids. Regulates the peroxisomal beta-oxidation pathway of fatty acids. Functions as a transcription activator for the ACOX1 and P450 genes. Transactivation activity requires heterodimerization with RXRA and is antagonized by NR2C2. May be required for the propagation of clock information to metabolic pathways regulated by PER2 (By similarity).</text>
</comment>
<comment type="subunit">
    <text evidence="2 3 4">Heterodimer; with RXRA. This heterodimerization is required for DNA binding and transactivation activity. Interacts with NCOA3 coactivator. Interacts with CITED2; the interaction stimulates its transcriptional activity. Also interacts with PPARBP in vitro. Interacts with AKAP13, LPIN1, PRDM16 and coactivator NCOA6. Interacts with ASXL1 and ASXL2. Interacts with PER2. Interacts with SIRT1; the interaction seems to be modulated by NAD(+) levels (By similarity). Interacts with CRY1 and CRY2 (By similarity). In hepatocytes, interacts with PAQR3 and HUWE1; the interactions promote PPARA poylubiquitination and HUWE1-mediated degradation (By similarity).</text>
</comment>
<comment type="subcellular location">
    <subcellularLocation>
        <location evidence="5">Nucleus</location>
    </subcellularLocation>
</comment>
<comment type="PTM">
    <text evidence="2">Ubiquitinated by E3 ubiquitin-protein ligase HUWE1; leading to proteasomal degradation.</text>
</comment>
<comment type="PTM">
    <text evidence="3">Phosphorylated.</text>
</comment>
<comment type="similarity">
    <text evidence="8">Belongs to the nuclear hormone receptor family. NR1 subfamily.</text>
</comment>
<gene>
    <name type="primary">PPARA</name>
    <name type="synonym">NR1C1</name>
</gene>
<name>PPARA_PHACI</name>
<evidence type="ECO:0000250" key="1"/>
<evidence type="ECO:0000250" key="2">
    <source>
        <dbReference type="UniProtKB" id="P23204"/>
    </source>
</evidence>
<evidence type="ECO:0000250" key="3">
    <source>
        <dbReference type="UniProtKB" id="P37230"/>
    </source>
</evidence>
<evidence type="ECO:0000250" key="4">
    <source>
        <dbReference type="UniProtKB" id="Q07869"/>
    </source>
</evidence>
<evidence type="ECO:0000255" key="5">
    <source>
        <dbReference type="PROSITE-ProRule" id="PRU00407"/>
    </source>
</evidence>
<evidence type="ECO:0000255" key="6">
    <source>
        <dbReference type="PROSITE-ProRule" id="PRU01189"/>
    </source>
</evidence>
<evidence type="ECO:0000256" key="7">
    <source>
        <dbReference type="SAM" id="MobiDB-lite"/>
    </source>
</evidence>
<evidence type="ECO:0000305" key="8"/>
<dbReference type="EMBL" id="AF463455">
    <property type="protein sequence ID" value="AAO15578.1"/>
    <property type="molecule type" value="mRNA"/>
</dbReference>
<dbReference type="SMR" id="Q8HYL6"/>
<dbReference type="FunCoup" id="Q8HYL6">
    <property type="interactions" value="2084"/>
</dbReference>
<dbReference type="InParanoid" id="Q8HYL6"/>
<dbReference type="Proteomes" id="UP000515140">
    <property type="component" value="Unplaced"/>
</dbReference>
<dbReference type="GO" id="GO:0005634">
    <property type="term" value="C:nucleus"/>
    <property type="evidence" value="ECO:0007669"/>
    <property type="project" value="UniProtKB-SubCell"/>
</dbReference>
<dbReference type="GO" id="GO:0001227">
    <property type="term" value="F:DNA-binding transcription repressor activity, RNA polymerase II-specific"/>
    <property type="evidence" value="ECO:0007669"/>
    <property type="project" value="TreeGrafter"/>
</dbReference>
<dbReference type="GO" id="GO:0008289">
    <property type="term" value="F:lipid binding"/>
    <property type="evidence" value="ECO:0000250"/>
    <property type="project" value="UniProtKB"/>
</dbReference>
<dbReference type="GO" id="GO:0004879">
    <property type="term" value="F:nuclear receptor activity"/>
    <property type="evidence" value="ECO:0000250"/>
    <property type="project" value="UniProtKB"/>
</dbReference>
<dbReference type="GO" id="GO:0000978">
    <property type="term" value="F:RNA polymerase II cis-regulatory region sequence-specific DNA binding"/>
    <property type="evidence" value="ECO:0007669"/>
    <property type="project" value="TreeGrafter"/>
</dbReference>
<dbReference type="GO" id="GO:0008270">
    <property type="term" value="F:zinc ion binding"/>
    <property type="evidence" value="ECO:0007669"/>
    <property type="project" value="UniProtKB-KW"/>
</dbReference>
<dbReference type="GO" id="GO:0030154">
    <property type="term" value="P:cell differentiation"/>
    <property type="evidence" value="ECO:0007669"/>
    <property type="project" value="TreeGrafter"/>
</dbReference>
<dbReference type="GO" id="GO:0032922">
    <property type="term" value="P:circadian regulation of gene expression"/>
    <property type="evidence" value="ECO:0000250"/>
    <property type="project" value="UniProtKB"/>
</dbReference>
<dbReference type="GO" id="GO:0006631">
    <property type="term" value="P:fatty acid metabolic process"/>
    <property type="evidence" value="ECO:0007669"/>
    <property type="project" value="TreeGrafter"/>
</dbReference>
<dbReference type="GO" id="GO:0009755">
    <property type="term" value="P:hormone-mediated signaling pathway"/>
    <property type="evidence" value="ECO:0007669"/>
    <property type="project" value="TreeGrafter"/>
</dbReference>
<dbReference type="GO" id="GO:0032099">
    <property type="term" value="P:negative regulation of appetite"/>
    <property type="evidence" value="ECO:0000250"/>
    <property type="project" value="UniProtKB"/>
</dbReference>
<dbReference type="GO" id="GO:0010887">
    <property type="term" value="P:negative regulation of cholesterol storage"/>
    <property type="evidence" value="ECO:0007669"/>
    <property type="project" value="TreeGrafter"/>
</dbReference>
<dbReference type="GO" id="GO:0050728">
    <property type="term" value="P:negative regulation of inflammatory response"/>
    <property type="evidence" value="ECO:0007669"/>
    <property type="project" value="TreeGrafter"/>
</dbReference>
<dbReference type="GO" id="GO:0035357">
    <property type="term" value="P:peroxisome proliferator activated receptor signaling pathway"/>
    <property type="evidence" value="ECO:0000250"/>
    <property type="project" value="UniProtKB"/>
</dbReference>
<dbReference type="GO" id="GO:0045893">
    <property type="term" value="P:positive regulation of DNA-templated transcription"/>
    <property type="evidence" value="ECO:0000250"/>
    <property type="project" value="UniProtKB"/>
</dbReference>
<dbReference type="GO" id="GO:0045923">
    <property type="term" value="P:positive regulation of fatty acid metabolic process"/>
    <property type="evidence" value="ECO:0007669"/>
    <property type="project" value="TreeGrafter"/>
</dbReference>
<dbReference type="GO" id="GO:0045944">
    <property type="term" value="P:positive regulation of transcription by RNA polymerase II"/>
    <property type="evidence" value="ECO:0007669"/>
    <property type="project" value="TreeGrafter"/>
</dbReference>
<dbReference type="GO" id="GO:0042752">
    <property type="term" value="P:regulation of circadian rhythm"/>
    <property type="evidence" value="ECO:0000250"/>
    <property type="project" value="UniProtKB"/>
</dbReference>
<dbReference type="CDD" id="cd06965">
    <property type="entry name" value="NR_DBD_Ppar"/>
    <property type="match status" value="1"/>
</dbReference>
<dbReference type="CDD" id="cd06932">
    <property type="entry name" value="NR_LBD_PPAR"/>
    <property type="match status" value="1"/>
</dbReference>
<dbReference type="FunFam" id="1.10.565.10:FF:000013">
    <property type="entry name" value="Peroxisome proliferator-activated receptor delta"/>
    <property type="match status" value="1"/>
</dbReference>
<dbReference type="FunFam" id="3.30.50.10:FF:000010">
    <property type="entry name" value="Peroxisome proliferator-activated receptor gamma"/>
    <property type="match status" value="1"/>
</dbReference>
<dbReference type="Gene3D" id="3.30.50.10">
    <property type="entry name" value="Erythroid Transcription Factor GATA-1, subunit A"/>
    <property type="match status" value="1"/>
</dbReference>
<dbReference type="Gene3D" id="1.10.565.10">
    <property type="entry name" value="Retinoid X Receptor"/>
    <property type="match status" value="1"/>
</dbReference>
<dbReference type="InterPro" id="IPR003074">
    <property type="entry name" value="1Cnucl_rcpt"/>
</dbReference>
<dbReference type="InterPro" id="IPR035500">
    <property type="entry name" value="NHR-like_dom_sf"/>
</dbReference>
<dbReference type="InterPro" id="IPR000536">
    <property type="entry name" value="Nucl_hrmn_rcpt_lig-bd"/>
</dbReference>
<dbReference type="InterPro" id="IPR050234">
    <property type="entry name" value="Nuclear_hormone_rcpt_NR1"/>
</dbReference>
<dbReference type="InterPro" id="IPR001723">
    <property type="entry name" value="Nuclear_hrmn_rcpt"/>
</dbReference>
<dbReference type="InterPro" id="IPR003076">
    <property type="entry name" value="PPAR-alpha"/>
</dbReference>
<dbReference type="InterPro" id="IPR001628">
    <property type="entry name" value="Znf_hrmn_rcpt"/>
</dbReference>
<dbReference type="InterPro" id="IPR013088">
    <property type="entry name" value="Znf_NHR/GATA"/>
</dbReference>
<dbReference type="PANTHER" id="PTHR24082">
    <property type="entry name" value="NUCLEAR HORMONE RECEPTOR"/>
    <property type="match status" value="1"/>
</dbReference>
<dbReference type="PANTHER" id="PTHR24082:SF197">
    <property type="entry name" value="PEROXISOME PROLIFERATOR-ACTIVATED RECEPTOR ALPHA"/>
    <property type="match status" value="1"/>
</dbReference>
<dbReference type="Pfam" id="PF00104">
    <property type="entry name" value="Hormone_recep"/>
    <property type="match status" value="1"/>
</dbReference>
<dbReference type="Pfam" id="PF00105">
    <property type="entry name" value="zf-C4"/>
    <property type="match status" value="1"/>
</dbReference>
<dbReference type="PRINTS" id="PR01288">
    <property type="entry name" value="PROXISOMEPAR"/>
</dbReference>
<dbReference type="PRINTS" id="PR01289">
    <property type="entry name" value="PROXISOMPAAR"/>
</dbReference>
<dbReference type="PRINTS" id="PR00398">
    <property type="entry name" value="STRDHORMONER"/>
</dbReference>
<dbReference type="PRINTS" id="PR00047">
    <property type="entry name" value="STROIDFINGER"/>
</dbReference>
<dbReference type="SMART" id="SM00430">
    <property type="entry name" value="HOLI"/>
    <property type="match status" value="1"/>
</dbReference>
<dbReference type="SMART" id="SM00399">
    <property type="entry name" value="ZnF_C4"/>
    <property type="match status" value="1"/>
</dbReference>
<dbReference type="SUPFAM" id="SSF57716">
    <property type="entry name" value="Glucocorticoid receptor-like (DNA-binding domain)"/>
    <property type="match status" value="1"/>
</dbReference>
<dbReference type="SUPFAM" id="SSF48508">
    <property type="entry name" value="Nuclear receptor ligand-binding domain"/>
    <property type="match status" value="1"/>
</dbReference>
<dbReference type="PROSITE" id="PS51843">
    <property type="entry name" value="NR_LBD"/>
    <property type="match status" value="1"/>
</dbReference>
<dbReference type="PROSITE" id="PS00031">
    <property type="entry name" value="NUCLEAR_REC_DBD_1"/>
    <property type="match status" value="1"/>
</dbReference>
<dbReference type="PROSITE" id="PS51030">
    <property type="entry name" value="NUCLEAR_REC_DBD_2"/>
    <property type="match status" value="1"/>
</dbReference>
<keyword id="KW-0010">Activator</keyword>
<keyword id="KW-0090">Biological rhythms</keyword>
<keyword id="KW-0238">DNA-binding</keyword>
<keyword id="KW-0446">Lipid-binding</keyword>
<keyword id="KW-0479">Metal-binding</keyword>
<keyword id="KW-0539">Nucleus</keyword>
<keyword id="KW-0675">Receptor</keyword>
<keyword id="KW-1185">Reference proteome</keyword>
<keyword id="KW-0804">Transcription</keyword>
<keyword id="KW-0805">Transcription regulation</keyword>
<keyword id="KW-0832">Ubl conjugation</keyword>
<keyword id="KW-0862">Zinc</keyword>
<keyword id="KW-0863">Zinc-finger</keyword>
<proteinExistence type="evidence at transcript level"/>